<evidence type="ECO:0000255" key="1">
    <source>
        <dbReference type="HAMAP-Rule" id="MF_00361"/>
    </source>
</evidence>
<proteinExistence type="inferred from homology"/>
<reference key="1">
    <citation type="journal article" date="2005" name="Genome Res.">
        <title>Living with two extremes: conclusions from the genome sequence of Natronomonas pharaonis.</title>
        <authorList>
            <person name="Falb M."/>
            <person name="Pfeiffer F."/>
            <person name="Palm P."/>
            <person name="Rodewald K."/>
            <person name="Hickmann V."/>
            <person name="Tittor J."/>
            <person name="Oesterhelt D."/>
        </authorList>
    </citation>
    <scope>NUCLEOTIDE SEQUENCE [LARGE SCALE GENOMIC DNA]</scope>
    <source>
        <strain>ATCC 35678 / DSM 2160 / CIP 103997 / JCM 8858 / NBRC 14720 / NCIMB 2260 / Gabara</strain>
    </source>
</reference>
<keyword id="KW-0067">ATP-binding</keyword>
<keyword id="KW-0963">Cytoplasm</keyword>
<keyword id="KW-0418">Kinase</keyword>
<keyword id="KW-0520">NAD</keyword>
<keyword id="KW-0521">NADP</keyword>
<keyword id="KW-0547">Nucleotide-binding</keyword>
<keyword id="KW-1185">Reference proteome</keyword>
<keyword id="KW-0808">Transferase</keyword>
<name>NADK_NATPD</name>
<protein>
    <recommendedName>
        <fullName evidence="1">NAD kinase</fullName>
        <ecNumber evidence="1">2.7.1.23</ecNumber>
    </recommendedName>
    <alternativeName>
        <fullName evidence="1">ATP-dependent NAD kinase</fullName>
    </alternativeName>
</protein>
<feature type="chain" id="PRO_0000229720" description="NAD kinase">
    <location>
        <begin position="1"/>
        <end position="270"/>
    </location>
</feature>
<feature type="active site" description="Proton acceptor" evidence="1">
    <location>
        <position position="61"/>
    </location>
</feature>
<feature type="binding site" evidence="1">
    <location>
        <begin position="61"/>
        <end position="62"/>
    </location>
    <ligand>
        <name>NAD(+)</name>
        <dbReference type="ChEBI" id="CHEBI:57540"/>
    </ligand>
</feature>
<feature type="binding site" evidence="1">
    <location>
        <begin position="133"/>
        <end position="134"/>
    </location>
    <ligand>
        <name>NAD(+)</name>
        <dbReference type="ChEBI" id="CHEBI:57540"/>
    </ligand>
</feature>
<feature type="binding site" evidence="1">
    <location>
        <position position="144"/>
    </location>
    <ligand>
        <name>NAD(+)</name>
        <dbReference type="ChEBI" id="CHEBI:57540"/>
    </ligand>
</feature>
<feature type="binding site" evidence="1">
    <location>
        <position position="163"/>
    </location>
    <ligand>
        <name>NAD(+)</name>
        <dbReference type="ChEBI" id="CHEBI:57540"/>
    </ligand>
</feature>
<feature type="binding site" evidence="1">
    <location>
        <position position="165"/>
    </location>
    <ligand>
        <name>NAD(+)</name>
        <dbReference type="ChEBI" id="CHEBI:57540"/>
    </ligand>
</feature>
<feature type="binding site" evidence="1">
    <location>
        <begin position="176"/>
        <end position="181"/>
    </location>
    <ligand>
        <name>NAD(+)</name>
        <dbReference type="ChEBI" id="CHEBI:57540"/>
    </ligand>
</feature>
<gene>
    <name evidence="1" type="primary">nadK</name>
    <name type="ordered locus">NP_2512A</name>
</gene>
<organism>
    <name type="scientific">Natronomonas pharaonis (strain ATCC 35678 / DSM 2160 / CIP 103997 / JCM 8858 / NBRC 14720 / NCIMB 2260 / Gabara)</name>
    <name type="common">Halobacterium pharaonis</name>
    <dbReference type="NCBI Taxonomy" id="348780"/>
    <lineage>
        <taxon>Archaea</taxon>
        <taxon>Methanobacteriati</taxon>
        <taxon>Methanobacteriota</taxon>
        <taxon>Stenosarchaea group</taxon>
        <taxon>Halobacteria</taxon>
        <taxon>Halobacteriales</taxon>
        <taxon>Haloarculaceae</taxon>
        <taxon>Natronomonas</taxon>
    </lineage>
</organism>
<comment type="function">
    <text evidence="1">Involved in the regulation of the intracellular balance of NAD and NADP, and is a key enzyme in the biosynthesis of NADP. Catalyzes specifically the phosphorylation on 2'-hydroxyl of the adenosine moiety of NAD to yield NADP.</text>
</comment>
<comment type="catalytic activity">
    <reaction evidence="1">
        <text>NAD(+) + ATP = ADP + NADP(+) + H(+)</text>
        <dbReference type="Rhea" id="RHEA:18629"/>
        <dbReference type="ChEBI" id="CHEBI:15378"/>
        <dbReference type="ChEBI" id="CHEBI:30616"/>
        <dbReference type="ChEBI" id="CHEBI:57540"/>
        <dbReference type="ChEBI" id="CHEBI:58349"/>
        <dbReference type="ChEBI" id="CHEBI:456216"/>
        <dbReference type="EC" id="2.7.1.23"/>
    </reaction>
</comment>
<comment type="cofactor">
    <cofactor evidence="1">
        <name>a divalent metal cation</name>
        <dbReference type="ChEBI" id="CHEBI:60240"/>
    </cofactor>
</comment>
<comment type="subcellular location">
    <subcellularLocation>
        <location evidence="1">Cytoplasm</location>
    </subcellularLocation>
</comment>
<comment type="similarity">
    <text evidence="1">Belongs to the NAD kinase family.</text>
</comment>
<accession>Q3IR96</accession>
<sequence length="270" mass="27955">MELGIVAKRETPRAVELADRIRRHVDVPVTLDNLTADELDANGTDVTSLSACDLVVSIGGDGTFLFAAREVSPTPVLGVNLGEVGFLNAVSPEECVETVAGVVERMQAGDAELQELPQLQATGPGLSLPAAVNEVAVLGPQRGRDNGLDIDVRVNGEGYSSGRADGVLVSTPTGSTAYNLSEGGPIVHPDVSAFVVTEMCAESSMPSLAVPTDRTITVHVDGADHAVVAADGRTRSQVAPPAEITLAVAADPVRIAGPKLEFFTALDKLD</sequence>
<dbReference type="EC" id="2.7.1.23" evidence="1"/>
<dbReference type="EMBL" id="CR936257">
    <property type="protein sequence ID" value="CAI49347.1"/>
    <property type="molecule type" value="Genomic_DNA"/>
</dbReference>
<dbReference type="RefSeq" id="WP_011322973.1">
    <property type="nucleotide sequence ID" value="NC_007426.1"/>
</dbReference>
<dbReference type="SMR" id="Q3IR96"/>
<dbReference type="STRING" id="348780.NP_2512A"/>
<dbReference type="EnsemblBacteria" id="CAI49347">
    <property type="protein sequence ID" value="CAI49347"/>
    <property type="gene ID" value="NP_2512A"/>
</dbReference>
<dbReference type="GeneID" id="3703046"/>
<dbReference type="KEGG" id="nph:NP_2512A"/>
<dbReference type="eggNOG" id="arCOG01348">
    <property type="taxonomic scope" value="Archaea"/>
</dbReference>
<dbReference type="HOGENOM" id="CLU_008831_0_2_2"/>
<dbReference type="OrthoDB" id="77798at2157"/>
<dbReference type="Proteomes" id="UP000002698">
    <property type="component" value="Chromosome"/>
</dbReference>
<dbReference type="GO" id="GO:0005737">
    <property type="term" value="C:cytoplasm"/>
    <property type="evidence" value="ECO:0007669"/>
    <property type="project" value="UniProtKB-SubCell"/>
</dbReference>
<dbReference type="GO" id="GO:0005524">
    <property type="term" value="F:ATP binding"/>
    <property type="evidence" value="ECO:0007669"/>
    <property type="project" value="UniProtKB-KW"/>
</dbReference>
<dbReference type="GO" id="GO:0046872">
    <property type="term" value="F:metal ion binding"/>
    <property type="evidence" value="ECO:0007669"/>
    <property type="project" value="UniProtKB-UniRule"/>
</dbReference>
<dbReference type="GO" id="GO:0003951">
    <property type="term" value="F:NAD+ kinase activity"/>
    <property type="evidence" value="ECO:0007669"/>
    <property type="project" value="UniProtKB-UniRule"/>
</dbReference>
<dbReference type="GO" id="GO:0019674">
    <property type="term" value="P:NAD metabolic process"/>
    <property type="evidence" value="ECO:0007669"/>
    <property type="project" value="InterPro"/>
</dbReference>
<dbReference type="GO" id="GO:0006741">
    <property type="term" value="P:NADP biosynthetic process"/>
    <property type="evidence" value="ECO:0007669"/>
    <property type="project" value="UniProtKB-UniRule"/>
</dbReference>
<dbReference type="Gene3D" id="3.40.50.10330">
    <property type="entry name" value="Probable inorganic polyphosphate/atp-NAD kinase, domain 1"/>
    <property type="match status" value="1"/>
</dbReference>
<dbReference type="Gene3D" id="2.60.200.30">
    <property type="entry name" value="Probable inorganic polyphosphate/atp-NAD kinase, domain 2"/>
    <property type="match status" value="1"/>
</dbReference>
<dbReference type="HAMAP" id="MF_00361">
    <property type="entry name" value="NAD_kinase"/>
    <property type="match status" value="1"/>
</dbReference>
<dbReference type="InterPro" id="IPR017438">
    <property type="entry name" value="ATP-NAD_kinase_N"/>
</dbReference>
<dbReference type="InterPro" id="IPR017437">
    <property type="entry name" value="ATP-NAD_kinase_PpnK-typ_C"/>
</dbReference>
<dbReference type="InterPro" id="IPR016064">
    <property type="entry name" value="NAD/diacylglycerol_kinase_sf"/>
</dbReference>
<dbReference type="InterPro" id="IPR002504">
    <property type="entry name" value="NADK"/>
</dbReference>
<dbReference type="PANTHER" id="PTHR20275:SF43">
    <property type="entry name" value="BIFUNCTIONAL NADP PHOSPHATASE_NAD KINASE"/>
    <property type="match status" value="1"/>
</dbReference>
<dbReference type="PANTHER" id="PTHR20275">
    <property type="entry name" value="NAD KINASE"/>
    <property type="match status" value="1"/>
</dbReference>
<dbReference type="Pfam" id="PF01513">
    <property type="entry name" value="NAD_kinase"/>
    <property type="match status" value="1"/>
</dbReference>
<dbReference type="Pfam" id="PF20143">
    <property type="entry name" value="NAD_kinase_C"/>
    <property type="match status" value="1"/>
</dbReference>
<dbReference type="SUPFAM" id="SSF111331">
    <property type="entry name" value="NAD kinase/diacylglycerol kinase-like"/>
    <property type="match status" value="1"/>
</dbReference>